<gene>
    <name evidence="1" type="primary">rex</name>
</gene>
<comment type="function">
    <text evidence="1">Modulates transcription in response to changes in cellular NADH/NAD(+) redox state.</text>
</comment>
<comment type="subunit">
    <text evidence="1">Homodimer.</text>
</comment>
<comment type="subcellular location">
    <subcellularLocation>
        <location evidence="1">Cytoplasm</location>
    </subcellularLocation>
</comment>
<comment type="similarity">
    <text evidence="1">Belongs to the transcriptional regulatory Rex family.</text>
</comment>
<dbReference type="EMBL" id="AB066353">
    <property type="protein sequence ID" value="BAB83964.2"/>
    <property type="molecule type" value="Genomic_DNA"/>
</dbReference>
<dbReference type="SMR" id="Q8VUP4"/>
<dbReference type="STRING" id="1321372.GCA_000478745_01542"/>
<dbReference type="eggNOG" id="COG2344">
    <property type="taxonomic scope" value="Bacteria"/>
</dbReference>
<dbReference type="GO" id="GO:0005737">
    <property type="term" value="C:cytoplasm"/>
    <property type="evidence" value="ECO:0007669"/>
    <property type="project" value="UniProtKB-SubCell"/>
</dbReference>
<dbReference type="GO" id="GO:0003677">
    <property type="term" value="F:DNA binding"/>
    <property type="evidence" value="ECO:0007669"/>
    <property type="project" value="UniProtKB-KW"/>
</dbReference>
<dbReference type="GO" id="GO:0045892">
    <property type="term" value="P:negative regulation of DNA-templated transcription"/>
    <property type="evidence" value="ECO:0007669"/>
    <property type="project" value="InterPro"/>
</dbReference>
<dbReference type="GO" id="GO:0051775">
    <property type="term" value="P:response to redox state"/>
    <property type="evidence" value="ECO:0007669"/>
    <property type="project" value="InterPro"/>
</dbReference>
<dbReference type="Gene3D" id="3.40.50.720">
    <property type="entry name" value="NAD(P)-binding Rossmann-like Domain"/>
    <property type="match status" value="1"/>
</dbReference>
<dbReference type="Gene3D" id="1.10.10.10">
    <property type="entry name" value="Winged helix-like DNA-binding domain superfamily/Winged helix DNA-binding domain"/>
    <property type="match status" value="1"/>
</dbReference>
<dbReference type="HAMAP" id="MF_01131">
    <property type="entry name" value="Rex"/>
    <property type="match status" value="1"/>
</dbReference>
<dbReference type="InterPro" id="IPR003781">
    <property type="entry name" value="CoA-bd"/>
</dbReference>
<dbReference type="InterPro" id="IPR036291">
    <property type="entry name" value="NAD(P)-bd_dom_sf"/>
</dbReference>
<dbReference type="InterPro" id="IPR022876">
    <property type="entry name" value="Tscrpt_rep_Rex"/>
</dbReference>
<dbReference type="InterPro" id="IPR036388">
    <property type="entry name" value="WH-like_DNA-bd_sf"/>
</dbReference>
<dbReference type="InterPro" id="IPR036390">
    <property type="entry name" value="WH_DNA-bd_sf"/>
</dbReference>
<dbReference type="NCBIfam" id="NF003988">
    <property type="entry name" value="PRK05472.1-1"/>
    <property type="match status" value="1"/>
</dbReference>
<dbReference type="NCBIfam" id="NF003989">
    <property type="entry name" value="PRK05472.1-3"/>
    <property type="match status" value="1"/>
</dbReference>
<dbReference type="NCBIfam" id="NF003994">
    <property type="entry name" value="PRK05472.2-3"/>
    <property type="match status" value="1"/>
</dbReference>
<dbReference type="NCBIfam" id="NF003995">
    <property type="entry name" value="PRK05472.2-4"/>
    <property type="match status" value="1"/>
</dbReference>
<dbReference type="NCBIfam" id="NF003996">
    <property type="entry name" value="PRK05472.2-5"/>
    <property type="match status" value="1"/>
</dbReference>
<dbReference type="PANTHER" id="PTHR35786">
    <property type="entry name" value="REDOX-SENSING TRANSCRIPTIONAL REPRESSOR REX"/>
    <property type="match status" value="1"/>
</dbReference>
<dbReference type="PANTHER" id="PTHR35786:SF1">
    <property type="entry name" value="REDOX-SENSING TRANSCRIPTIONAL REPRESSOR REX 1"/>
    <property type="match status" value="1"/>
</dbReference>
<dbReference type="Pfam" id="PF02629">
    <property type="entry name" value="CoA_binding"/>
    <property type="match status" value="1"/>
</dbReference>
<dbReference type="SMART" id="SM00881">
    <property type="entry name" value="CoA_binding"/>
    <property type="match status" value="1"/>
</dbReference>
<dbReference type="SUPFAM" id="SSF51735">
    <property type="entry name" value="NAD(P)-binding Rossmann-fold domains"/>
    <property type="match status" value="1"/>
</dbReference>
<dbReference type="SUPFAM" id="SSF46785">
    <property type="entry name" value="Winged helix' DNA-binding domain"/>
    <property type="match status" value="1"/>
</dbReference>
<proteinExistence type="inferred from homology"/>
<organism>
    <name type="scientific">Streptococcus suis</name>
    <dbReference type="NCBI Taxonomy" id="1307"/>
    <lineage>
        <taxon>Bacteria</taxon>
        <taxon>Bacillati</taxon>
        <taxon>Bacillota</taxon>
        <taxon>Bacilli</taxon>
        <taxon>Lactobacillales</taxon>
        <taxon>Streptococcaceae</taxon>
        <taxon>Streptococcus</taxon>
    </lineage>
</organism>
<keyword id="KW-0963">Cytoplasm</keyword>
<keyword id="KW-0238">DNA-binding</keyword>
<keyword id="KW-0520">NAD</keyword>
<keyword id="KW-0678">Repressor</keyword>
<keyword id="KW-0804">Transcription</keyword>
<keyword id="KW-0805">Transcription regulation</keyword>
<sequence>ASSKEIAEAIGIDSATVRRDFSYFGELGRRGFGYNVKELMDFFADILNDTSITNVMLVGVGNMGRALLHYRFHERNKMKIVMAFEADDNPAVGTTDENIPIHAISEIKERISEANSQTAILTVPSVKAQEVTDILVEAGVKGILSFSPVNLSVPKDVVVQYVDLTSELQTLLYFMRKG</sequence>
<name>REX_STRSU</name>
<reference key="1">
    <citation type="journal article" date="2002" name="J. Bacteriol.">
        <title>Characterization of Streptococcus suis genes encoding proteins homologous to sortase of Gram-positive bacteria.</title>
        <authorList>
            <person name="Osaki M."/>
            <person name="Takamatsu D."/>
            <person name="Shimoji Y."/>
            <person name="Sekizaki T."/>
        </authorList>
    </citation>
    <scope>NUCLEOTIDE SEQUENCE [GENOMIC DNA]</scope>
    <source>
        <strain>NCTC 10234</strain>
    </source>
</reference>
<evidence type="ECO:0000255" key="1">
    <source>
        <dbReference type="HAMAP-Rule" id="MF_01131"/>
    </source>
</evidence>
<protein>
    <recommendedName>
        <fullName evidence="1">Redox-sensing transcriptional repressor Rex</fullName>
    </recommendedName>
</protein>
<feature type="chain" id="PRO_0000097924" description="Redox-sensing transcriptional repressor Rex">
    <location>
        <begin position="1"/>
        <end position="178"/>
    </location>
</feature>
<feature type="binding site" evidence="1">
    <location>
        <begin position="59"/>
        <end position="64"/>
    </location>
    <ligand>
        <name>NAD(+)</name>
        <dbReference type="ChEBI" id="CHEBI:57540"/>
    </ligand>
</feature>
<feature type="non-terminal residue">
    <location>
        <position position="1"/>
    </location>
</feature>
<accession>Q8VUP4</accession>